<keyword id="KW-0131">Cell cycle</keyword>
<keyword id="KW-0132">Cell division</keyword>
<keyword id="KW-0963">Cytoplasm</keyword>
<keyword id="KW-0342">GTP-binding</keyword>
<keyword id="KW-0547">Nucleotide-binding</keyword>
<keyword id="KW-1185">Reference proteome</keyword>
<keyword id="KW-0717">Septation</keyword>
<dbReference type="EMBL" id="AE000516">
    <property type="protein sequence ID" value="AAK46493.1"/>
    <property type="status" value="ALT_INIT"/>
    <property type="molecule type" value="Genomic_DNA"/>
</dbReference>
<dbReference type="PIR" id="B70579">
    <property type="entry name" value="B70579"/>
</dbReference>
<dbReference type="RefSeq" id="WP_003411144.1">
    <property type="nucleotide sequence ID" value="NZ_KK341227.1"/>
</dbReference>
<dbReference type="SMR" id="P9WN94"/>
<dbReference type="GeneID" id="45426128"/>
<dbReference type="KEGG" id="mtc:MT2209"/>
<dbReference type="PATRIC" id="fig|83331.31.peg.2382"/>
<dbReference type="HOGENOM" id="CLU_024865_0_1_11"/>
<dbReference type="Proteomes" id="UP000001020">
    <property type="component" value="Chromosome"/>
</dbReference>
<dbReference type="GO" id="GO:0032153">
    <property type="term" value="C:cell division site"/>
    <property type="evidence" value="ECO:0007669"/>
    <property type="project" value="UniProtKB-UniRule"/>
</dbReference>
<dbReference type="GO" id="GO:0005737">
    <property type="term" value="C:cytoplasm"/>
    <property type="evidence" value="ECO:0007669"/>
    <property type="project" value="UniProtKB-SubCell"/>
</dbReference>
<dbReference type="GO" id="GO:0005525">
    <property type="term" value="F:GTP binding"/>
    <property type="evidence" value="ECO:0007669"/>
    <property type="project" value="UniProtKB-UniRule"/>
</dbReference>
<dbReference type="GO" id="GO:0003924">
    <property type="term" value="F:GTPase activity"/>
    <property type="evidence" value="ECO:0007669"/>
    <property type="project" value="UniProtKB-UniRule"/>
</dbReference>
<dbReference type="GO" id="GO:0000917">
    <property type="term" value="P:division septum assembly"/>
    <property type="evidence" value="ECO:0007669"/>
    <property type="project" value="UniProtKB-KW"/>
</dbReference>
<dbReference type="GO" id="GO:0043093">
    <property type="term" value="P:FtsZ-dependent cytokinesis"/>
    <property type="evidence" value="ECO:0007669"/>
    <property type="project" value="UniProtKB-UniRule"/>
</dbReference>
<dbReference type="GO" id="GO:0051258">
    <property type="term" value="P:protein polymerization"/>
    <property type="evidence" value="ECO:0007669"/>
    <property type="project" value="UniProtKB-UniRule"/>
</dbReference>
<dbReference type="CDD" id="cd02201">
    <property type="entry name" value="FtsZ_type1"/>
    <property type="match status" value="1"/>
</dbReference>
<dbReference type="FunFam" id="3.30.1330.20:FF:000005">
    <property type="entry name" value="Cell division protein FtsZ"/>
    <property type="match status" value="1"/>
</dbReference>
<dbReference type="FunFam" id="3.40.50.1440:FF:000001">
    <property type="entry name" value="Cell division protein FtsZ"/>
    <property type="match status" value="1"/>
</dbReference>
<dbReference type="Gene3D" id="3.30.1330.20">
    <property type="entry name" value="Tubulin/FtsZ, C-terminal domain"/>
    <property type="match status" value="1"/>
</dbReference>
<dbReference type="Gene3D" id="3.40.50.1440">
    <property type="entry name" value="Tubulin/FtsZ, GTPase domain"/>
    <property type="match status" value="1"/>
</dbReference>
<dbReference type="HAMAP" id="MF_00909">
    <property type="entry name" value="FtsZ"/>
    <property type="match status" value="1"/>
</dbReference>
<dbReference type="InterPro" id="IPR000158">
    <property type="entry name" value="Cell_div_FtsZ"/>
</dbReference>
<dbReference type="InterPro" id="IPR020805">
    <property type="entry name" value="Cell_div_FtsZ_CS"/>
</dbReference>
<dbReference type="InterPro" id="IPR045061">
    <property type="entry name" value="FtsZ/CetZ"/>
</dbReference>
<dbReference type="InterPro" id="IPR024757">
    <property type="entry name" value="FtsZ_C"/>
</dbReference>
<dbReference type="InterPro" id="IPR008280">
    <property type="entry name" value="Tub_FtsZ_C"/>
</dbReference>
<dbReference type="InterPro" id="IPR037103">
    <property type="entry name" value="Tubulin/FtsZ-like_C"/>
</dbReference>
<dbReference type="InterPro" id="IPR018316">
    <property type="entry name" value="Tubulin/FtsZ_2-layer-sand-dom"/>
</dbReference>
<dbReference type="InterPro" id="IPR036525">
    <property type="entry name" value="Tubulin/FtsZ_GTPase_sf"/>
</dbReference>
<dbReference type="InterPro" id="IPR003008">
    <property type="entry name" value="Tubulin_FtsZ_GTPase"/>
</dbReference>
<dbReference type="NCBIfam" id="TIGR00065">
    <property type="entry name" value="ftsZ"/>
    <property type="match status" value="1"/>
</dbReference>
<dbReference type="PANTHER" id="PTHR30314">
    <property type="entry name" value="CELL DIVISION PROTEIN FTSZ-RELATED"/>
    <property type="match status" value="1"/>
</dbReference>
<dbReference type="PANTHER" id="PTHR30314:SF3">
    <property type="entry name" value="MITOCHONDRIAL DIVISION PROTEIN FSZA"/>
    <property type="match status" value="1"/>
</dbReference>
<dbReference type="Pfam" id="PF12327">
    <property type="entry name" value="FtsZ_C"/>
    <property type="match status" value="1"/>
</dbReference>
<dbReference type="Pfam" id="PF00091">
    <property type="entry name" value="Tubulin"/>
    <property type="match status" value="1"/>
</dbReference>
<dbReference type="PRINTS" id="PR00423">
    <property type="entry name" value="CELLDVISFTSZ"/>
</dbReference>
<dbReference type="SMART" id="SM00864">
    <property type="entry name" value="Tubulin"/>
    <property type="match status" value="1"/>
</dbReference>
<dbReference type="SMART" id="SM00865">
    <property type="entry name" value="Tubulin_C"/>
    <property type="match status" value="1"/>
</dbReference>
<dbReference type="SUPFAM" id="SSF55307">
    <property type="entry name" value="Tubulin C-terminal domain-like"/>
    <property type="match status" value="1"/>
</dbReference>
<dbReference type="SUPFAM" id="SSF52490">
    <property type="entry name" value="Tubulin nucleotide-binding domain-like"/>
    <property type="match status" value="1"/>
</dbReference>
<dbReference type="PROSITE" id="PS01134">
    <property type="entry name" value="FTSZ_1"/>
    <property type="match status" value="1"/>
</dbReference>
<dbReference type="PROSITE" id="PS01135">
    <property type="entry name" value="FTSZ_2"/>
    <property type="match status" value="1"/>
</dbReference>
<proteinExistence type="inferred from homology"/>
<reference key="1">
    <citation type="journal article" date="2002" name="J. Bacteriol.">
        <title>Whole-genome comparison of Mycobacterium tuberculosis clinical and laboratory strains.</title>
        <authorList>
            <person name="Fleischmann R.D."/>
            <person name="Alland D."/>
            <person name="Eisen J.A."/>
            <person name="Carpenter L."/>
            <person name="White O."/>
            <person name="Peterson J.D."/>
            <person name="DeBoy R.T."/>
            <person name="Dodson R.J."/>
            <person name="Gwinn M.L."/>
            <person name="Haft D.H."/>
            <person name="Hickey E.K."/>
            <person name="Kolonay J.F."/>
            <person name="Nelson W.C."/>
            <person name="Umayam L.A."/>
            <person name="Ermolaeva M.D."/>
            <person name="Salzberg S.L."/>
            <person name="Delcher A."/>
            <person name="Utterback T.R."/>
            <person name="Weidman J.F."/>
            <person name="Khouri H.M."/>
            <person name="Gill J."/>
            <person name="Mikula A."/>
            <person name="Bishai W."/>
            <person name="Jacobs W.R. Jr."/>
            <person name="Venter J.C."/>
            <person name="Fraser C.M."/>
        </authorList>
    </citation>
    <scope>NUCLEOTIDE SEQUENCE [LARGE SCALE GENOMIC DNA]</scope>
    <source>
        <strain>CDC 1551 / Oshkosh</strain>
    </source>
</reference>
<feature type="chain" id="PRO_0000427166" description="Cell division protein FtsZ">
    <location>
        <begin position="1"/>
        <end position="379"/>
    </location>
</feature>
<feature type="binding site" evidence="2">
    <location>
        <begin position="18"/>
        <end position="22"/>
    </location>
    <ligand>
        <name>GTP</name>
        <dbReference type="ChEBI" id="CHEBI:37565"/>
    </ligand>
</feature>
<feature type="binding site" evidence="2">
    <location>
        <begin position="105"/>
        <end position="107"/>
    </location>
    <ligand>
        <name>GTP</name>
        <dbReference type="ChEBI" id="CHEBI:37565"/>
    </ligand>
</feature>
<feature type="binding site" evidence="2">
    <location>
        <position position="136"/>
    </location>
    <ligand>
        <name>GTP</name>
        <dbReference type="ChEBI" id="CHEBI:37565"/>
    </ligand>
</feature>
<feature type="binding site" evidence="2">
    <location>
        <position position="140"/>
    </location>
    <ligand>
        <name>GTP</name>
        <dbReference type="ChEBI" id="CHEBI:37565"/>
    </ligand>
</feature>
<feature type="binding site" evidence="2">
    <location>
        <position position="184"/>
    </location>
    <ligand>
        <name>GTP</name>
        <dbReference type="ChEBI" id="CHEBI:37565"/>
    </ligand>
</feature>
<gene>
    <name evidence="2" type="primary">ftsZ</name>
    <name type="ordered locus">MT2209</name>
</gene>
<evidence type="ECO:0000250" key="1"/>
<evidence type="ECO:0000255" key="2">
    <source>
        <dbReference type="HAMAP-Rule" id="MF_00909"/>
    </source>
</evidence>
<evidence type="ECO:0000305" key="3"/>
<organism>
    <name type="scientific">Mycobacterium tuberculosis (strain CDC 1551 / Oshkosh)</name>
    <dbReference type="NCBI Taxonomy" id="83331"/>
    <lineage>
        <taxon>Bacteria</taxon>
        <taxon>Bacillati</taxon>
        <taxon>Actinomycetota</taxon>
        <taxon>Actinomycetes</taxon>
        <taxon>Mycobacteriales</taxon>
        <taxon>Mycobacteriaceae</taxon>
        <taxon>Mycobacterium</taxon>
        <taxon>Mycobacterium tuberculosis complex</taxon>
    </lineage>
</organism>
<comment type="function">
    <text evidence="1">Essential cell division protein that forms a contractile ring structure (Z ring) at the future cell division site. The regulation of the ring assembly controls the timing and the location of cell division. One of the functions of the FtsZ ring is to recruit other cell division proteins to the septum to produce a new cell wall between the dividing cells (By similarity).</text>
</comment>
<comment type="subunit">
    <text evidence="2">Homodimer. Polymerizes to form a dynamic ring structure in a strictly GTP-dependent manner. Interacts directly with several other division proteins.</text>
</comment>
<comment type="subcellular location">
    <subcellularLocation>
        <location evidence="2">Cytoplasm</location>
    </subcellularLocation>
    <text evidence="2">Assembles at midcell at the inner surface of the cytoplasmic membrane.</text>
</comment>
<comment type="similarity">
    <text evidence="2">Belongs to the FtsZ family.</text>
</comment>
<comment type="sequence caution" evidence="3">
    <conflict type="erroneous initiation">
        <sequence resource="EMBL-CDS" id="AAK46493"/>
    </conflict>
    <text>Extended N-terminus.</text>
</comment>
<protein>
    <recommendedName>
        <fullName evidence="2">Cell division protein FtsZ</fullName>
    </recommendedName>
</protein>
<sequence length="379" mass="38756">MTPPHNYLAVIKVVGIGGGGVNAVNRMIEQGLKGVEFIAINTDAQALLMSDADVKLDVGRDSTRGLGAGADPEVGRKAAEDAKDEIEELLRGADMVFVTAGEGGGTGTGGAPVVASIARKLGALTVGVVTRPFSFEGKRRSNQAENGIAALRESCDTLIVIPNDRLLQMGDAAVSLMDAFRSADEVLLNGVQGITDLITTPGLINVDFADVKGIMSGAGTALMGIGSARGEGRSLKAAEIAINSPLLEASMEGAQGVLMSIAGGSDLGLFEINEAASLVQDAAHPDANIIFGTVIDDSLGDEVRVTVIAAGFDVSGPGRKPVMGETGGAHRIESAKAGKLTSTLFEPVDAVSVPLHTNGATLSIGGDDDDVDVPPFMRR</sequence>
<accession>P9WN94</accession>
<accession>L0TBN4</accession>
<accession>O08378</accession>
<accession>P64170</accession>
<name>FTSZ_MYCTO</name>